<gene>
    <name type="primary">oppB</name>
    <name type="ordered locus">HI_1123</name>
</gene>
<proteinExistence type="inferred from homology"/>
<comment type="function">
    <text evidence="1">Part of the ABC transporter complex OppABCDF involved in the uptake of oligopeptides (By similarity). Probably responsible for the translocation of the substrate across the membrane (By similarity).</text>
</comment>
<comment type="subunit">
    <text evidence="1">The complex is composed of two ATP-binding proteins (OppD and OppF), two transmembrane proteins (OppB and OppC) and a solute-binding protein (OppA).</text>
</comment>
<comment type="subcellular location">
    <subcellularLocation>
        <location evidence="1">Cell inner membrane</location>
        <topology evidence="2">Multi-pass membrane protein</topology>
    </subcellularLocation>
</comment>
<comment type="similarity">
    <text evidence="4">Belongs to the binding-protein-dependent transport system permease family. OppBC subfamily.</text>
</comment>
<protein>
    <recommendedName>
        <fullName evidence="4">Oligopeptide transport system permease protein OppB</fullName>
    </recommendedName>
</protein>
<name>OPPB_HAEIN</name>
<sequence length="306" mass="33690">MLKFIFKRLLEALPTLFILITFSFFLMRLAPGSPFTSERAYPPEVMANIEAKYHLNEPLYKQYFLYLENLSKGDFGPSFKYKDQSVNDLIASAFPVSIKLGMVAFAFAVVLGVTAGTLAALNQNSRWDYILMSFSMLGVIMPSFVFAPVLVLIFAIYLGWLPAGGWNGGTAMYMILPVASLTIAYVAGIARIMRGSMIEVLHSNFIRTAKAKGLSMSRIILKHALRPALLPVITYLGPAFVGIITGSMVIESVFGLPGMGLLFVNGALNRDYSLVLSLTILVGTLTILFNAIVDILYAIIDPKIRY</sequence>
<keyword id="KW-0997">Cell inner membrane</keyword>
<keyword id="KW-1003">Cell membrane</keyword>
<keyword id="KW-0472">Membrane</keyword>
<keyword id="KW-0571">Peptide transport</keyword>
<keyword id="KW-0653">Protein transport</keyword>
<keyword id="KW-1185">Reference proteome</keyword>
<keyword id="KW-0812">Transmembrane</keyword>
<keyword id="KW-1133">Transmembrane helix</keyword>
<keyword id="KW-0813">Transport</keyword>
<accession>P45054</accession>
<dbReference type="EMBL" id="L42023">
    <property type="protein sequence ID" value="AAC22777.1"/>
    <property type="molecule type" value="Genomic_DNA"/>
</dbReference>
<dbReference type="PIR" id="E64184">
    <property type="entry name" value="E64184"/>
</dbReference>
<dbReference type="RefSeq" id="NP_439280.1">
    <property type="nucleotide sequence ID" value="NC_000907.1"/>
</dbReference>
<dbReference type="SMR" id="P45054"/>
<dbReference type="STRING" id="71421.HI_1123"/>
<dbReference type="EnsemblBacteria" id="AAC22777">
    <property type="protein sequence ID" value="AAC22777"/>
    <property type="gene ID" value="HI_1123"/>
</dbReference>
<dbReference type="KEGG" id="hin:HI_1123"/>
<dbReference type="PATRIC" id="fig|71421.8.peg.1172"/>
<dbReference type="eggNOG" id="COG0601">
    <property type="taxonomic scope" value="Bacteria"/>
</dbReference>
<dbReference type="HOGENOM" id="CLU_036879_0_0_6"/>
<dbReference type="OrthoDB" id="9805855at2"/>
<dbReference type="PhylomeDB" id="P45054"/>
<dbReference type="BioCyc" id="HINF71421:G1GJ1-1158-MONOMER"/>
<dbReference type="Proteomes" id="UP000000579">
    <property type="component" value="Chromosome"/>
</dbReference>
<dbReference type="GO" id="GO:0005886">
    <property type="term" value="C:plasma membrane"/>
    <property type="evidence" value="ECO:0000318"/>
    <property type="project" value="GO_Central"/>
</dbReference>
<dbReference type="GO" id="GO:0015640">
    <property type="term" value="F:peptidoglycan peptide transmembrane transporter activity"/>
    <property type="evidence" value="ECO:0000318"/>
    <property type="project" value="GO_Central"/>
</dbReference>
<dbReference type="GO" id="GO:0015031">
    <property type="term" value="P:protein transport"/>
    <property type="evidence" value="ECO:0007669"/>
    <property type="project" value="UniProtKB-KW"/>
</dbReference>
<dbReference type="CDD" id="cd06261">
    <property type="entry name" value="TM_PBP2"/>
    <property type="match status" value="1"/>
</dbReference>
<dbReference type="FunFam" id="1.10.3720.10:FF:000016">
    <property type="entry name" value="Oligopeptide transport system permease OppB"/>
    <property type="match status" value="1"/>
</dbReference>
<dbReference type="Gene3D" id="1.10.3720.10">
    <property type="entry name" value="MetI-like"/>
    <property type="match status" value="1"/>
</dbReference>
<dbReference type="InterPro" id="IPR045621">
    <property type="entry name" value="BPD_transp_1_N"/>
</dbReference>
<dbReference type="InterPro" id="IPR000515">
    <property type="entry name" value="MetI-like"/>
</dbReference>
<dbReference type="InterPro" id="IPR035906">
    <property type="entry name" value="MetI-like_sf"/>
</dbReference>
<dbReference type="NCBIfam" id="NF007008">
    <property type="entry name" value="PRK09471.1"/>
    <property type="match status" value="1"/>
</dbReference>
<dbReference type="PANTHER" id="PTHR43163">
    <property type="entry name" value="DIPEPTIDE TRANSPORT SYSTEM PERMEASE PROTEIN DPPB-RELATED"/>
    <property type="match status" value="1"/>
</dbReference>
<dbReference type="PANTHER" id="PTHR43163:SF6">
    <property type="entry name" value="DIPEPTIDE TRANSPORT SYSTEM PERMEASE PROTEIN DPPB-RELATED"/>
    <property type="match status" value="1"/>
</dbReference>
<dbReference type="Pfam" id="PF00528">
    <property type="entry name" value="BPD_transp_1"/>
    <property type="match status" value="1"/>
</dbReference>
<dbReference type="Pfam" id="PF19300">
    <property type="entry name" value="BPD_transp_1_N"/>
    <property type="match status" value="1"/>
</dbReference>
<dbReference type="SUPFAM" id="SSF161098">
    <property type="entry name" value="MetI-like"/>
    <property type="match status" value="1"/>
</dbReference>
<dbReference type="PROSITE" id="PS50928">
    <property type="entry name" value="ABC_TM1"/>
    <property type="match status" value="1"/>
</dbReference>
<feature type="chain" id="PRO_0000060148" description="Oligopeptide transport system permease protein OppB">
    <location>
        <begin position="1"/>
        <end position="306"/>
    </location>
</feature>
<feature type="topological domain" description="Cytoplasmic" evidence="4">
    <location>
        <begin position="1"/>
        <end position="8"/>
    </location>
</feature>
<feature type="transmembrane region" description="Helical" evidence="2">
    <location>
        <begin position="9"/>
        <end position="29"/>
    </location>
</feature>
<feature type="topological domain" description="Periplasmic" evidence="4">
    <location>
        <begin position="30"/>
        <end position="99"/>
    </location>
</feature>
<feature type="transmembrane region" description="Helical" evidence="2">
    <location>
        <begin position="100"/>
        <end position="120"/>
    </location>
</feature>
<feature type="topological domain" description="Cytoplasmic" evidence="4">
    <location>
        <begin position="121"/>
        <end position="135"/>
    </location>
</feature>
<feature type="transmembrane region" description="Helical" evidence="2">
    <location>
        <begin position="136"/>
        <end position="156"/>
    </location>
</feature>
<feature type="topological domain" description="Periplasmic" evidence="4">
    <location>
        <begin position="157"/>
        <end position="169"/>
    </location>
</feature>
<feature type="transmembrane region" description="Helical" evidence="2">
    <location>
        <begin position="170"/>
        <end position="190"/>
    </location>
</feature>
<feature type="topological domain" description="Cytoplasmic" evidence="4">
    <location>
        <begin position="191"/>
        <end position="229"/>
    </location>
</feature>
<feature type="transmembrane region" description="Helical" evidence="2">
    <location>
        <begin position="230"/>
        <end position="250"/>
    </location>
</feature>
<feature type="topological domain" description="Periplasmic" evidence="4">
    <location>
        <begin position="251"/>
        <end position="279"/>
    </location>
</feature>
<feature type="transmembrane region" description="Helical" evidence="2">
    <location>
        <begin position="280"/>
        <end position="300"/>
    </location>
</feature>
<feature type="topological domain" description="Cytoplasmic" evidence="1">
    <location>
        <begin position="301"/>
        <end position="306"/>
    </location>
</feature>
<feature type="domain" description="ABC transmembrane type-1" evidence="3">
    <location>
        <begin position="94"/>
        <end position="293"/>
    </location>
</feature>
<reference key="1">
    <citation type="journal article" date="1995" name="Science">
        <title>Whole-genome random sequencing and assembly of Haemophilus influenzae Rd.</title>
        <authorList>
            <person name="Fleischmann R.D."/>
            <person name="Adams M.D."/>
            <person name="White O."/>
            <person name="Clayton R.A."/>
            <person name="Kirkness E.F."/>
            <person name="Kerlavage A.R."/>
            <person name="Bult C.J."/>
            <person name="Tomb J.-F."/>
            <person name="Dougherty B.A."/>
            <person name="Merrick J.M."/>
            <person name="McKenney K."/>
            <person name="Sutton G.G."/>
            <person name="FitzHugh W."/>
            <person name="Fields C.A."/>
            <person name="Gocayne J.D."/>
            <person name="Scott J.D."/>
            <person name="Shirley R."/>
            <person name="Liu L.-I."/>
            <person name="Glodek A."/>
            <person name="Kelley J.M."/>
            <person name="Weidman J.F."/>
            <person name="Phillips C.A."/>
            <person name="Spriggs T."/>
            <person name="Hedblom E."/>
            <person name="Cotton M.D."/>
            <person name="Utterback T.R."/>
            <person name="Hanna M.C."/>
            <person name="Nguyen D.T."/>
            <person name="Saudek D.M."/>
            <person name="Brandon R.C."/>
            <person name="Fine L.D."/>
            <person name="Fritchman J.L."/>
            <person name="Fuhrmann J.L."/>
            <person name="Geoghagen N.S.M."/>
            <person name="Gnehm C.L."/>
            <person name="McDonald L.A."/>
            <person name="Small K.V."/>
            <person name="Fraser C.M."/>
            <person name="Smith H.O."/>
            <person name="Venter J.C."/>
        </authorList>
    </citation>
    <scope>NUCLEOTIDE SEQUENCE [LARGE SCALE GENOMIC DNA]</scope>
    <source>
        <strain>ATCC 51907 / DSM 11121 / KW20 / Rd</strain>
    </source>
</reference>
<evidence type="ECO:0000250" key="1">
    <source>
        <dbReference type="UniProtKB" id="P0AFH2"/>
    </source>
</evidence>
<evidence type="ECO:0000255" key="2"/>
<evidence type="ECO:0000255" key="3">
    <source>
        <dbReference type="PROSITE-ProRule" id="PRU00441"/>
    </source>
</evidence>
<evidence type="ECO:0000305" key="4"/>
<organism>
    <name type="scientific">Haemophilus influenzae (strain ATCC 51907 / DSM 11121 / KW20 / Rd)</name>
    <dbReference type="NCBI Taxonomy" id="71421"/>
    <lineage>
        <taxon>Bacteria</taxon>
        <taxon>Pseudomonadati</taxon>
        <taxon>Pseudomonadota</taxon>
        <taxon>Gammaproteobacteria</taxon>
        <taxon>Pasteurellales</taxon>
        <taxon>Pasteurellaceae</taxon>
        <taxon>Haemophilus</taxon>
    </lineage>
</organism>